<protein>
    <recommendedName>
        <fullName evidence="1">DNA repair protein RecO</fullName>
    </recommendedName>
    <alternativeName>
        <fullName evidence="1">Recombination protein O</fullName>
    </alternativeName>
</protein>
<evidence type="ECO:0000255" key="1">
    <source>
        <dbReference type="HAMAP-Rule" id="MF_00201"/>
    </source>
</evidence>
<keyword id="KW-0227">DNA damage</keyword>
<keyword id="KW-0233">DNA recombination</keyword>
<keyword id="KW-0234">DNA repair</keyword>
<sequence length="247" mass="27669">MEWRDEGVILGTRRHGETSAIVEVMTCGHGRHMGMVRGGRSRRMQPLLQPGNHVDVSWWARLDEHMGTFTIEPLSFAAARLIETPVALYGIQLAAAHLRLLPERDPHRGLYETLRLIIEHFDDPLAAGELLLRFEVMMLEELGFGLDLKECAATGRKDDLIYVSPKSGRAVCREAGAPWAEKLLSLPSFVNDTALRASCYDDLDRAFTMTGYFLMRHVWEPRAQTPPDSRSGFLNAVGRAINLSQAS</sequence>
<name>RECO_BRUAB</name>
<gene>
    <name evidence="1" type="primary">recO</name>
    <name type="ordered locus">BruAb1_0681</name>
</gene>
<comment type="function">
    <text evidence="1">Involved in DNA repair and RecF pathway recombination.</text>
</comment>
<comment type="similarity">
    <text evidence="1">Belongs to the RecO family.</text>
</comment>
<dbReference type="EMBL" id="AE017223">
    <property type="protein sequence ID" value="AAX74056.1"/>
    <property type="molecule type" value="Genomic_DNA"/>
</dbReference>
<dbReference type="RefSeq" id="WP_002963807.1">
    <property type="nucleotide sequence ID" value="NC_006932.1"/>
</dbReference>
<dbReference type="SMR" id="Q57E78"/>
<dbReference type="EnsemblBacteria" id="AAX74056">
    <property type="protein sequence ID" value="AAX74056"/>
    <property type="gene ID" value="BruAb1_0681"/>
</dbReference>
<dbReference type="GeneID" id="93016931"/>
<dbReference type="KEGG" id="bmb:BruAb1_0681"/>
<dbReference type="HOGENOM" id="CLU_086029_0_0_5"/>
<dbReference type="Proteomes" id="UP000000540">
    <property type="component" value="Chromosome I"/>
</dbReference>
<dbReference type="GO" id="GO:0043590">
    <property type="term" value="C:bacterial nucleoid"/>
    <property type="evidence" value="ECO:0007669"/>
    <property type="project" value="TreeGrafter"/>
</dbReference>
<dbReference type="GO" id="GO:0006310">
    <property type="term" value="P:DNA recombination"/>
    <property type="evidence" value="ECO:0007669"/>
    <property type="project" value="UniProtKB-UniRule"/>
</dbReference>
<dbReference type="GO" id="GO:0006302">
    <property type="term" value="P:double-strand break repair"/>
    <property type="evidence" value="ECO:0007669"/>
    <property type="project" value="TreeGrafter"/>
</dbReference>
<dbReference type="Gene3D" id="2.40.50.140">
    <property type="entry name" value="Nucleic acid-binding proteins"/>
    <property type="match status" value="1"/>
</dbReference>
<dbReference type="Gene3D" id="1.20.1440.120">
    <property type="entry name" value="Recombination protein O, C-terminal domain"/>
    <property type="match status" value="1"/>
</dbReference>
<dbReference type="HAMAP" id="MF_00201">
    <property type="entry name" value="RecO"/>
    <property type="match status" value="1"/>
</dbReference>
<dbReference type="InterPro" id="IPR037278">
    <property type="entry name" value="ARFGAP/RecO"/>
</dbReference>
<dbReference type="InterPro" id="IPR022572">
    <property type="entry name" value="DNA_rep/recomb_RecO_N"/>
</dbReference>
<dbReference type="InterPro" id="IPR012340">
    <property type="entry name" value="NA-bd_OB-fold"/>
</dbReference>
<dbReference type="InterPro" id="IPR003717">
    <property type="entry name" value="RecO"/>
</dbReference>
<dbReference type="InterPro" id="IPR042242">
    <property type="entry name" value="RecO_C"/>
</dbReference>
<dbReference type="NCBIfam" id="TIGR00613">
    <property type="entry name" value="reco"/>
    <property type="match status" value="1"/>
</dbReference>
<dbReference type="PANTHER" id="PTHR33991">
    <property type="entry name" value="DNA REPAIR PROTEIN RECO"/>
    <property type="match status" value="1"/>
</dbReference>
<dbReference type="PANTHER" id="PTHR33991:SF1">
    <property type="entry name" value="DNA REPAIR PROTEIN RECO"/>
    <property type="match status" value="1"/>
</dbReference>
<dbReference type="Pfam" id="PF02565">
    <property type="entry name" value="RecO_C"/>
    <property type="match status" value="1"/>
</dbReference>
<dbReference type="Pfam" id="PF11967">
    <property type="entry name" value="RecO_N"/>
    <property type="match status" value="1"/>
</dbReference>
<dbReference type="SUPFAM" id="SSF57863">
    <property type="entry name" value="ArfGap/RecO-like zinc finger"/>
    <property type="match status" value="1"/>
</dbReference>
<dbReference type="SUPFAM" id="SSF50249">
    <property type="entry name" value="Nucleic acid-binding proteins"/>
    <property type="match status" value="1"/>
</dbReference>
<reference key="1">
    <citation type="journal article" date="2005" name="J. Bacteriol.">
        <title>Completion of the genome sequence of Brucella abortus and comparison to the highly similar genomes of Brucella melitensis and Brucella suis.</title>
        <authorList>
            <person name="Halling S.M."/>
            <person name="Peterson-Burch B.D."/>
            <person name="Bricker B.J."/>
            <person name="Zuerner R.L."/>
            <person name="Qing Z."/>
            <person name="Li L.-L."/>
            <person name="Kapur V."/>
            <person name="Alt D.P."/>
            <person name="Olsen S.C."/>
        </authorList>
    </citation>
    <scope>NUCLEOTIDE SEQUENCE [LARGE SCALE GENOMIC DNA]</scope>
    <source>
        <strain>9-941</strain>
    </source>
</reference>
<accession>Q57E78</accession>
<feature type="chain" id="PRO_0000227037" description="DNA repair protein RecO">
    <location>
        <begin position="1"/>
        <end position="247"/>
    </location>
</feature>
<organism>
    <name type="scientific">Brucella abortus biovar 1 (strain 9-941)</name>
    <dbReference type="NCBI Taxonomy" id="262698"/>
    <lineage>
        <taxon>Bacteria</taxon>
        <taxon>Pseudomonadati</taxon>
        <taxon>Pseudomonadota</taxon>
        <taxon>Alphaproteobacteria</taxon>
        <taxon>Hyphomicrobiales</taxon>
        <taxon>Brucellaceae</taxon>
        <taxon>Brucella/Ochrobactrum group</taxon>
        <taxon>Brucella</taxon>
    </lineage>
</organism>
<proteinExistence type="inferred from homology"/>